<feature type="chain" id="PRO_0000201186" description="Probable acyl-CoA dehydrogenase fadE25">
    <location>
        <begin position="1"/>
        <end position="389"/>
    </location>
</feature>
<proteinExistence type="inferred from homology"/>
<evidence type="ECO:0000250" key="1"/>
<evidence type="ECO:0000305" key="2"/>
<keyword id="KW-0274">FAD</keyword>
<keyword id="KW-0285">Flavoprotein</keyword>
<keyword id="KW-0560">Oxidoreductase</keyword>
<keyword id="KW-1185">Reference proteome</keyword>
<reference key="1">
    <citation type="journal article" date="2003" name="Proc. Natl. Acad. Sci. U.S.A.">
        <title>The complete genome sequence of Mycobacterium bovis.</title>
        <authorList>
            <person name="Garnier T."/>
            <person name="Eiglmeier K."/>
            <person name="Camus J.-C."/>
            <person name="Medina N."/>
            <person name="Mansoor H."/>
            <person name="Pryor M."/>
            <person name="Duthoy S."/>
            <person name="Grondin S."/>
            <person name="Lacroix C."/>
            <person name="Monsempe C."/>
            <person name="Simon S."/>
            <person name="Harris B."/>
            <person name="Atkin R."/>
            <person name="Doggett J."/>
            <person name="Mayes R."/>
            <person name="Keating L."/>
            <person name="Wheeler P.R."/>
            <person name="Parkhill J."/>
            <person name="Barrell B.G."/>
            <person name="Cole S.T."/>
            <person name="Gordon S.V."/>
            <person name="Hewinson R.G."/>
        </authorList>
    </citation>
    <scope>NUCLEOTIDE SEQUENCE [LARGE SCALE GENOMIC DNA]</scope>
    <source>
        <strain>ATCC BAA-935 / AF2122/97</strain>
    </source>
</reference>
<reference key="2">
    <citation type="journal article" date="2017" name="Genome Announc.">
        <title>Updated reference genome sequence and annotation of Mycobacterium bovis AF2122/97.</title>
        <authorList>
            <person name="Malone K.M."/>
            <person name="Farrell D."/>
            <person name="Stuber T.P."/>
            <person name="Schubert O.T."/>
            <person name="Aebersold R."/>
            <person name="Robbe-Austerman S."/>
            <person name="Gordon S.V."/>
        </authorList>
    </citation>
    <scope>NUCLEOTIDE SEQUENCE [LARGE SCALE GENOMIC DNA]</scope>
    <scope>GENOME REANNOTATION</scope>
    <source>
        <strain>ATCC BAA-935 / AF2122/97</strain>
    </source>
</reference>
<sequence>MVGWAGNPSFDLFKLPEEHDEMRSAIRALAEKEIAPHAAEVDEKARFPEEALVALNSSGFNAVHIPEEYGGQGADSVATCIVIEEVARVDASASLIPAVNKLGTMGLILRGSEELKKQVLPALAAEGAMASYALSEREAGSDAASMRTRAKADGDHWILNGAKCWITNGGKSTWYTVMAVTDPDRGANGISAFMVHKDDEGFTVGPKERKLGIKGSPTTELYFENCRIPGDRIIGEPGTGFKTALATLDHTRPTIGAQAVGIAQGALDAAIAYTKDRKQFGESISTFQAVQFMLADMAMKVEAARLMVYSAAARAERGEPDLGFISAASKCFASDVAMEVTTDAVQLFGGAGYTTDFPVERFMRDAKITQIYEGTNQIQRVVMSRALLR</sequence>
<protein>
    <recommendedName>
        <fullName>Probable acyl-CoA dehydrogenase fadE25</fullName>
        <ecNumber>1.3.99.-</ecNumber>
    </recommendedName>
</protein>
<dbReference type="EC" id="1.3.99.-"/>
<dbReference type="EMBL" id="LT708304">
    <property type="protein sequence ID" value="SIU01931.1"/>
    <property type="molecule type" value="Genomic_DNA"/>
</dbReference>
<dbReference type="RefSeq" id="NP_856947.1">
    <property type="nucleotide sequence ID" value="NC_002945.3"/>
</dbReference>
<dbReference type="RefSeq" id="WP_003417122.1">
    <property type="nucleotide sequence ID" value="NC_002945.4"/>
</dbReference>
<dbReference type="SMR" id="P63428"/>
<dbReference type="KEGG" id="mbo:BQ2027_MB3302C"/>
<dbReference type="PATRIC" id="fig|233413.5.peg.3631"/>
<dbReference type="Proteomes" id="UP000001419">
    <property type="component" value="Chromosome"/>
</dbReference>
<dbReference type="GO" id="GO:0003995">
    <property type="term" value="F:acyl-CoA dehydrogenase activity"/>
    <property type="evidence" value="ECO:0007669"/>
    <property type="project" value="InterPro"/>
</dbReference>
<dbReference type="GO" id="GO:0050660">
    <property type="term" value="F:flavin adenine dinucleotide binding"/>
    <property type="evidence" value="ECO:0007669"/>
    <property type="project" value="InterPro"/>
</dbReference>
<dbReference type="CDD" id="cd01158">
    <property type="entry name" value="SCAD_SBCAD"/>
    <property type="match status" value="1"/>
</dbReference>
<dbReference type="FunFam" id="1.10.540.10:FF:000023">
    <property type="entry name" value="Acyl-CoA dehydrogenase FadE25"/>
    <property type="match status" value="1"/>
</dbReference>
<dbReference type="FunFam" id="1.20.140.10:FF:000004">
    <property type="entry name" value="Acyl-CoA dehydrogenase FadE25"/>
    <property type="match status" value="1"/>
</dbReference>
<dbReference type="FunFam" id="2.40.110.10:FF:000001">
    <property type="entry name" value="Acyl-CoA dehydrogenase, mitochondrial"/>
    <property type="match status" value="1"/>
</dbReference>
<dbReference type="Gene3D" id="1.10.540.10">
    <property type="entry name" value="Acyl-CoA dehydrogenase/oxidase, N-terminal domain"/>
    <property type="match status" value="1"/>
</dbReference>
<dbReference type="Gene3D" id="2.40.110.10">
    <property type="entry name" value="Butyryl-CoA Dehydrogenase, subunit A, domain 2"/>
    <property type="match status" value="1"/>
</dbReference>
<dbReference type="Gene3D" id="1.20.140.10">
    <property type="entry name" value="Butyryl-CoA Dehydrogenase, subunit A, domain 3"/>
    <property type="match status" value="1"/>
</dbReference>
<dbReference type="InterPro" id="IPR006089">
    <property type="entry name" value="Acyl-CoA_DH_CS"/>
</dbReference>
<dbReference type="InterPro" id="IPR006091">
    <property type="entry name" value="Acyl-CoA_Oxase/DH_mid-dom"/>
</dbReference>
<dbReference type="InterPro" id="IPR046373">
    <property type="entry name" value="Acyl-CoA_Oxase/DH_mid-dom_sf"/>
</dbReference>
<dbReference type="InterPro" id="IPR036250">
    <property type="entry name" value="AcylCo_DH-like_C"/>
</dbReference>
<dbReference type="InterPro" id="IPR009075">
    <property type="entry name" value="AcylCo_DH/oxidase_C"/>
</dbReference>
<dbReference type="InterPro" id="IPR013786">
    <property type="entry name" value="AcylCoA_DH/ox_N"/>
</dbReference>
<dbReference type="InterPro" id="IPR037069">
    <property type="entry name" value="AcylCoA_DH/ox_N_sf"/>
</dbReference>
<dbReference type="InterPro" id="IPR009100">
    <property type="entry name" value="AcylCoA_DH/oxidase_NM_dom_sf"/>
</dbReference>
<dbReference type="PANTHER" id="PTHR43884">
    <property type="entry name" value="ACYL-COA DEHYDROGENASE"/>
    <property type="match status" value="1"/>
</dbReference>
<dbReference type="PANTHER" id="PTHR43884:SF12">
    <property type="entry name" value="ISOVALERYL-COA DEHYDROGENASE, MITOCHONDRIAL-RELATED"/>
    <property type="match status" value="1"/>
</dbReference>
<dbReference type="Pfam" id="PF00441">
    <property type="entry name" value="Acyl-CoA_dh_1"/>
    <property type="match status" value="1"/>
</dbReference>
<dbReference type="Pfam" id="PF02770">
    <property type="entry name" value="Acyl-CoA_dh_M"/>
    <property type="match status" value="1"/>
</dbReference>
<dbReference type="Pfam" id="PF02771">
    <property type="entry name" value="Acyl-CoA_dh_N"/>
    <property type="match status" value="1"/>
</dbReference>
<dbReference type="PIRSF" id="PIRSF016578">
    <property type="entry name" value="HsaA"/>
    <property type="match status" value="1"/>
</dbReference>
<dbReference type="SUPFAM" id="SSF47203">
    <property type="entry name" value="Acyl-CoA dehydrogenase C-terminal domain-like"/>
    <property type="match status" value="1"/>
</dbReference>
<dbReference type="SUPFAM" id="SSF56645">
    <property type="entry name" value="Acyl-CoA dehydrogenase NM domain-like"/>
    <property type="match status" value="1"/>
</dbReference>
<dbReference type="PROSITE" id="PS00072">
    <property type="entry name" value="ACYL_COA_DH_1"/>
    <property type="match status" value="1"/>
</dbReference>
<dbReference type="PROSITE" id="PS00073">
    <property type="entry name" value="ACYL_COA_DH_2"/>
    <property type="match status" value="1"/>
</dbReference>
<name>ACDP_MYCBO</name>
<gene>
    <name type="primary">fadE25</name>
    <name type="synonym">acd</name>
    <name type="ordered locus">BQ2027_MB3302C</name>
</gene>
<accession>P63428</accession>
<accession>A0A1R3Y3N3</accession>
<accession>P96879</accession>
<accession>X2BN17</accession>
<organism>
    <name type="scientific">Mycobacterium bovis (strain ATCC BAA-935 / AF2122/97)</name>
    <dbReference type="NCBI Taxonomy" id="233413"/>
    <lineage>
        <taxon>Bacteria</taxon>
        <taxon>Bacillati</taxon>
        <taxon>Actinomycetota</taxon>
        <taxon>Actinomycetes</taxon>
        <taxon>Mycobacteriales</taxon>
        <taxon>Mycobacteriaceae</taxon>
        <taxon>Mycobacterium</taxon>
        <taxon>Mycobacterium tuberculosis complex</taxon>
    </lineage>
</organism>
<comment type="catalytic activity">
    <reaction>
        <text>a 2,3-saturated acyl-CoA + A = a 2,3-dehydroacyl-CoA + AH2</text>
        <dbReference type="Rhea" id="RHEA:48608"/>
        <dbReference type="ChEBI" id="CHEBI:13193"/>
        <dbReference type="ChEBI" id="CHEBI:17499"/>
        <dbReference type="ChEBI" id="CHEBI:60015"/>
        <dbReference type="ChEBI" id="CHEBI:65111"/>
    </reaction>
</comment>
<comment type="cofactor">
    <cofactor evidence="1">
        <name>FAD</name>
        <dbReference type="ChEBI" id="CHEBI:57692"/>
    </cofactor>
</comment>
<comment type="similarity">
    <text evidence="2">Belongs to the acyl-CoA dehydrogenase family.</text>
</comment>